<dbReference type="EC" id="3.2.1.17" evidence="2"/>
<dbReference type="EMBL" id="X87673">
    <property type="protein sequence ID" value="CAA61013.1"/>
    <property type="molecule type" value="Genomic_DNA"/>
</dbReference>
<dbReference type="EMBL" id="AF125376">
    <property type="protein sequence ID" value="AAD20630.1"/>
    <property type="molecule type" value="Genomic_DNA"/>
</dbReference>
<dbReference type="EMBL" id="AF234172">
    <property type="protein sequence ID" value="AAQ13989.1"/>
    <property type="molecule type" value="Genomic_DNA"/>
</dbReference>
<dbReference type="RefSeq" id="YP_006484.1">
    <property type="nucleotide sequence ID" value="NC_005856.1"/>
</dbReference>
<dbReference type="PDB" id="1XJT">
    <property type="method" value="X-ray"/>
    <property type="resolution" value="1.75 A"/>
    <property type="chains" value="A=1-185"/>
</dbReference>
<dbReference type="PDB" id="1XJU">
    <property type="method" value="X-ray"/>
    <property type="resolution" value="1.07 A"/>
    <property type="chains" value="A/B=29-185"/>
</dbReference>
<dbReference type="PDBsum" id="1XJT"/>
<dbReference type="PDBsum" id="1XJU"/>
<dbReference type="BMRB" id="Q37875"/>
<dbReference type="SMR" id="Q37875"/>
<dbReference type="DrugBank" id="DB04272">
    <property type="generic name" value="Citric acid"/>
</dbReference>
<dbReference type="CAZy" id="GH24">
    <property type="family name" value="Glycoside Hydrolase Family 24"/>
</dbReference>
<dbReference type="GeneID" id="2777454"/>
<dbReference type="KEGG" id="vg:2777454"/>
<dbReference type="EvolutionaryTrace" id="Q37875"/>
<dbReference type="Proteomes" id="UP000008091">
    <property type="component" value="Genome"/>
</dbReference>
<dbReference type="GO" id="GO:0020002">
    <property type="term" value="C:host cell plasma membrane"/>
    <property type="evidence" value="ECO:0007669"/>
    <property type="project" value="UniProtKB-SubCell"/>
</dbReference>
<dbReference type="GO" id="GO:0016020">
    <property type="term" value="C:membrane"/>
    <property type="evidence" value="ECO:0007669"/>
    <property type="project" value="UniProtKB-KW"/>
</dbReference>
<dbReference type="GO" id="GO:0003796">
    <property type="term" value="F:lysozyme activity"/>
    <property type="evidence" value="ECO:0007669"/>
    <property type="project" value="UniProtKB-EC"/>
</dbReference>
<dbReference type="GO" id="GO:0016998">
    <property type="term" value="P:cell wall macromolecule catabolic process"/>
    <property type="evidence" value="ECO:0007669"/>
    <property type="project" value="InterPro"/>
</dbReference>
<dbReference type="GO" id="GO:0042742">
    <property type="term" value="P:defense response to bacterium"/>
    <property type="evidence" value="ECO:0007669"/>
    <property type="project" value="UniProtKB-KW"/>
</dbReference>
<dbReference type="GO" id="GO:0031640">
    <property type="term" value="P:killing of cells of another organism"/>
    <property type="evidence" value="ECO:0007669"/>
    <property type="project" value="UniProtKB-KW"/>
</dbReference>
<dbReference type="GO" id="GO:0009253">
    <property type="term" value="P:peptidoglycan catabolic process"/>
    <property type="evidence" value="ECO:0007669"/>
    <property type="project" value="InterPro"/>
</dbReference>
<dbReference type="CDD" id="cd16901">
    <property type="entry name" value="lyz_P1"/>
    <property type="match status" value="1"/>
</dbReference>
<dbReference type="Gene3D" id="1.10.530.40">
    <property type="match status" value="1"/>
</dbReference>
<dbReference type="HAMAP" id="MF_04110">
    <property type="entry name" value="ENDOLYSIN_T4"/>
    <property type="match status" value="1"/>
</dbReference>
<dbReference type="HAMAP" id="MF_04136">
    <property type="entry name" value="SAR_ENDOLYSIN"/>
    <property type="match status" value="1"/>
</dbReference>
<dbReference type="InterPro" id="IPR051018">
    <property type="entry name" value="Bacteriophage_GH24"/>
</dbReference>
<dbReference type="InterPro" id="IPR034690">
    <property type="entry name" value="Endolysin_T4_type"/>
</dbReference>
<dbReference type="InterPro" id="IPR002196">
    <property type="entry name" value="Glyco_hydro_24"/>
</dbReference>
<dbReference type="InterPro" id="IPR023346">
    <property type="entry name" value="Lysozyme-like_dom_sf"/>
</dbReference>
<dbReference type="InterPro" id="IPR023347">
    <property type="entry name" value="Lysozyme_dom_sf"/>
</dbReference>
<dbReference type="InterPro" id="IPR043688">
    <property type="entry name" value="SAR_endolysin-like"/>
</dbReference>
<dbReference type="PANTHER" id="PTHR38107">
    <property type="match status" value="1"/>
</dbReference>
<dbReference type="PANTHER" id="PTHR38107:SF4">
    <property type="entry name" value="LYSOZYME"/>
    <property type="match status" value="1"/>
</dbReference>
<dbReference type="Pfam" id="PF00959">
    <property type="entry name" value="Phage_lysozyme"/>
    <property type="match status" value="1"/>
</dbReference>
<dbReference type="SUPFAM" id="SSF53955">
    <property type="entry name" value="Lysozyme-like"/>
    <property type="match status" value="1"/>
</dbReference>
<accession>Q37875</accession>
<organism>
    <name type="scientific">Escherichia phage P1</name>
    <name type="common">Bacteriophage P1</name>
    <dbReference type="NCBI Taxonomy" id="2886926"/>
    <lineage>
        <taxon>Viruses</taxon>
        <taxon>Duplodnaviria</taxon>
        <taxon>Heunggongvirae</taxon>
        <taxon>Uroviricota</taxon>
        <taxon>Caudoviricetes</taxon>
        <taxon>Punavirus</taxon>
        <taxon>Punavirus P1</taxon>
    </lineage>
</organism>
<comment type="function">
    <text evidence="2 3">Signal-arrest-release (SAR) endolysin with lysozyme activity that degrades host peptidoglycans and participates with the pinholin and spanin proteins in the sequential events which lead to programmed host cell lysis releasing the mature viral particles. Once the pinholin has permeabilized the host cell membrane, the SAR-endolysin is released into the periplasm where it breaks down the peptidoglycan layer.</text>
</comment>
<comment type="catalytic activity">
    <reaction evidence="2">
        <text>Hydrolysis of (1-&gt;4)-beta-linkages between N-acetylmuramic acid and N-acetyl-D-glucosamine residues in a peptidoglycan and between N-acetyl-D-glucosamine residues in chitodextrins.</text>
        <dbReference type="EC" id="3.2.1.17"/>
    </reaction>
</comment>
<comment type="subcellular location">
    <subcellularLocation>
        <location evidence="2 7">Host cell inner membrane</location>
        <topology evidence="2 7">Single-pass type II membrane protein</topology>
        <orientation evidence="2 3 7">Periplasmic side</orientation>
    </subcellularLocation>
    <text evidence="2 7">Secreted as a signal-anchored, membrane-tethered, inactive endolysin which is subsequently refolded, activated and released by membrane depolarization driven by the pinholin.</text>
</comment>
<comment type="domain">
    <text evidence="2">The signal-anchor, which may also be an uncleaved signal sequence tethers the SAR-endolysin to the membrane until the latter is depolarized by the holin, resulting in the escape of SAR-endolysin from the membrane.</text>
</comment>
<comment type="PTM">
    <text evidence="2 4">All the periplasmic cyteines of the inactive, membrane-associated endolysin are involved in disulfide bond. In the active soluble form, disulfide bonds are isomerized and only the catalytic cysteine remains free.</text>
</comment>
<comment type="similarity">
    <text evidence="2">Belongs to the glycosyl hydrolase 24 family.</text>
</comment>
<evidence type="ECO:0000255" key="1"/>
<evidence type="ECO:0000255" key="2">
    <source>
        <dbReference type="HAMAP-Rule" id="MF_04136"/>
    </source>
</evidence>
<evidence type="ECO:0000269" key="3">
    <source>
    </source>
</evidence>
<evidence type="ECO:0000269" key="4">
    <source>
    </source>
</evidence>
<evidence type="ECO:0000303" key="5">
    <source>
    </source>
</evidence>
<evidence type="ECO:0000305" key="6"/>
<evidence type="ECO:0000305" key="7">
    <source>
    </source>
</evidence>
<evidence type="ECO:0007744" key="8">
    <source>
        <dbReference type="PDB" id="1XJT"/>
    </source>
</evidence>
<evidence type="ECO:0007744" key="9">
    <source>
        <dbReference type="PDB" id="1XJU"/>
    </source>
</evidence>
<evidence type="ECO:0007829" key="10">
    <source>
        <dbReference type="PDB" id="1XJT"/>
    </source>
</evidence>
<evidence type="ECO:0007829" key="11">
    <source>
        <dbReference type="PDB" id="1XJU"/>
    </source>
</evidence>
<reference key="1">
    <citation type="journal article" date="1996" name="J. Bacteriol.">
        <title>Three functions of bacteriophage P1 involved in cell lysis.</title>
        <authorList>
            <person name="Schmidt C."/>
            <person name="Velleman M."/>
            <person name="Arber W."/>
        </authorList>
    </citation>
    <scope>NUCLEOTIDE SEQUENCE [GENOMIC DNA]</scope>
</reference>
<reference key="2">
    <citation type="submission" date="1999-04" db="EMBL/GenBank/DDBJ databases">
        <authorList>
            <person name="Lehnherr H."/>
            <person name="Bendtsen J.D."/>
            <person name="Preuss F."/>
            <person name="Ilyina T.V."/>
        </authorList>
    </citation>
    <scope>NUCLEOTIDE SEQUENCE [GENOMIC DNA]</scope>
</reference>
<reference key="3">
    <citation type="journal article" date="2004" name="J. Bacteriol.">
        <title>Genome of bacteriophage P1.</title>
        <authorList>
            <person name="Lobocka M.B."/>
            <person name="Rose D.J."/>
            <person name="Plunkett G. III"/>
            <person name="Rusin M."/>
            <person name="Samojedny A."/>
            <person name="Lehnherr H."/>
            <person name="Yarmolinsky M.B."/>
            <person name="Blattner F.R."/>
        </authorList>
    </citation>
    <scope>NUCLEOTIDE SEQUENCE [LARGE SCALE GENOMIC DNA]</scope>
</reference>
<reference key="4">
    <citation type="journal article" date="2004" name="Proc. Natl. Acad. Sci. U.S.A.">
        <title>A signal-arrest-release sequence mediates export and control of the phage P1 endolysin.</title>
        <authorList>
            <person name="Xu M."/>
            <person name="Struck D.K."/>
            <person name="Deaton J."/>
            <person name="Wang I.N."/>
            <person name="Young R."/>
        </authorList>
    </citation>
    <scope>FUNCTION</scope>
    <scope>TOPOLOGY</scope>
    <scope>SUBCELLULAR LOCATION</scope>
</reference>
<reference evidence="8 9" key="5">
    <citation type="journal article" date="2005" name="Science">
        <title>Disulfide isomerization after membrane release of its SAR domain activates P1 lysozyme.</title>
        <authorList>
            <person name="Xu M."/>
            <person name="Arulandu A."/>
            <person name="Struck D.K."/>
            <person name="Swanson S."/>
            <person name="Sacchettini J.C."/>
            <person name="Young R."/>
        </authorList>
    </citation>
    <scope>X-RAY CRYSTALLOGRAPHY (1.07 ANGSTROMS) OF 29-185</scope>
    <scope>DISULFIDE BOND</scope>
    <scope>SUBCELLULAR LOCATION</scope>
    <scope>MUTAGENESIS OF CYS-13; CYS-44 AND CYS-51</scope>
</reference>
<gene>
    <name type="primary">17</name>
    <name type="synonym">lysa</name>
    <name type="synonym">lyz</name>
</gene>
<name>ENLYS_BPP1</name>
<keyword id="KW-0002">3D-structure</keyword>
<keyword id="KW-0929">Antimicrobial</keyword>
<keyword id="KW-0081">Bacteriolytic enzyme</keyword>
<keyword id="KW-0204">Cytolysis</keyword>
<keyword id="KW-1015">Disulfide bond</keyword>
<keyword id="KW-0326">Glycosidase</keyword>
<keyword id="KW-1030">Host cell inner membrane</keyword>
<keyword id="KW-0578">Host cell lysis by virus</keyword>
<keyword id="KW-1032">Host cell membrane</keyword>
<keyword id="KW-1043">Host membrane</keyword>
<keyword id="KW-0378">Hydrolase</keyword>
<keyword id="KW-0472">Membrane</keyword>
<keyword id="KW-1185">Reference proteome</keyword>
<keyword id="KW-0735">Signal-anchor</keyword>
<keyword id="KW-0812">Transmembrane</keyword>
<keyword id="KW-1133">Transmembrane helix</keyword>
<keyword id="KW-1188">Viral release from host cell</keyword>
<sequence>MKGKTAAGGGAICAIAVMITIVMGNGNVRTNQAGLELIGNAEGCRRDPYMCPAGVWTDGIGNTHGVTPGVRKTDQQIAADWEKNILIAERCINQHFRGKDMPDNAFSAMTSAAFNMGCNSLRTYYSKARGMRVETSIHKWAQKGEWVNMCNHLPDFVNSNGVPLRGLKIRREKERQLCLTGLVNE</sequence>
<protein>
    <recommendedName>
        <fullName evidence="2">SAR-endolysin</fullName>
        <ecNumber evidence="2">3.2.1.17</ecNumber>
    </recommendedName>
    <alternativeName>
        <fullName evidence="2">Endolysin</fullName>
    </alternativeName>
    <alternativeName>
        <fullName>Gene product 17</fullName>
        <shortName>gp17</shortName>
    </alternativeName>
    <alternativeName>
        <fullName evidence="2">Lysis protein</fullName>
    </alternativeName>
    <alternativeName>
        <fullName evidence="2 5">Lysozyme</fullName>
    </alternativeName>
    <alternativeName>
        <fullName evidence="2">Muramidase</fullName>
    </alternativeName>
</protein>
<organismHost>
    <name type="scientific">Enterobacteriaceae</name>
    <dbReference type="NCBI Taxonomy" id="543"/>
</organismHost>
<feature type="chain" id="PRO_0000218099" description="SAR-endolysin">
    <location>
        <begin position="1"/>
        <end position="185"/>
    </location>
</feature>
<feature type="topological domain" description="Cytoplasmic" evidence="6">
    <location>
        <begin position="1"/>
        <end position="6"/>
    </location>
</feature>
<feature type="transmembrane region" description="Helical; Signal-anchor for type II membrane protein" evidence="1">
    <location>
        <begin position="7"/>
        <end position="24"/>
    </location>
</feature>
<feature type="topological domain" description="Periplasmic" evidence="3">
    <location>
        <begin position="25"/>
        <end position="185"/>
    </location>
</feature>
<feature type="active site" description="Proton donor/acceptor" evidence="2 7">
    <location>
        <position position="42"/>
    </location>
</feature>
<feature type="active site" description="Proton donor/acceptor" evidence="2 4">
    <location>
        <position position="51"/>
    </location>
</feature>
<feature type="disulfide bond" description="In the active soluble endolysin" evidence="2 4">
    <location>
        <begin position="13"/>
        <end position="44"/>
    </location>
</feature>
<feature type="disulfide bond" description="In the inactive membrane-associated endolysin" evidence="2 4">
    <location>
        <begin position="44"/>
        <end position="51"/>
    </location>
</feature>
<feature type="mutagenesis site" description="Complete loss of enzymatic activity although still releases from the host inner membrane." evidence="4">
    <original>C</original>
    <variation>A</variation>
    <variation>S</variation>
    <location>
        <position position="13"/>
    </location>
</feature>
<feature type="mutagenesis site" description="No effect on enzymatic activity; when associated with A-13 or S-13." evidence="4">
    <original>C</original>
    <variation>S</variation>
    <location>
        <position position="44"/>
    </location>
</feature>
<feature type="mutagenesis site" description="No effect on enzymatic activity." evidence="4">
    <original>C</original>
    <variation>D</variation>
    <location>
        <position position="51"/>
    </location>
</feature>
<feature type="helix" evidence="10">
    <location>
        <begin position="15"/>
        <end position="25"/>
    </location>
</feature>
<feature type="helix" evidence="11">
    <location>
        <begin position="32"/>
        <end position="38"/>
    </location>
</feature>
<feature type="helix" evidence="11">
    <location>
        <begin position="41"/>
        <end position="46"/>
    </location>
</feature>
<feature type="helix" evidence="11">
    <location>
        <begin position="48"/>
        <end position="50"/>
    </location>
</feature>
<feature type="helix" evidence="11">
    <location>
        <begin position="53"/>
        <end position="55"/>
    </location>
</feature>
<feature type="strand" evidence="10">
    <location>
        <begin position="56"/>
        <end position="59"/>
    </location>
</feature>
<feature type="helix" evidence="11">
    <location>
        <begin position="74"/>
        <end position="95"/>
    </location>
</feature>
<feature type="helix" evidence="11">
    <location>
        <begin position="98"/>
        <end position="100"/>
    </location>
</feature>
<feature type="helix" evidence="11">
    <location>
        <begin position="103"/>
        <end position="116"/>
    </location>
</feature>
<feature type="helix" evidence="11">
    <location>
        <begin position="118"/>
        <end position="122"/>
    </location>
</feature>
<feature type="strand" evidence="11">
    <location>
        <begin position="123"/>
        <end position="126"/>
    </location>
</feature>
<feature type="turn" evidence="11">
    <location>
        <begin position="127"/>
        <end position="130"/>
    </location>
</feature>
<feature type="strand" evidence="11">
    <location>
        <begin position="131"/>
        <end position="134"/>
    </location>
</feature>
<feature type="helix" evidence="11">
    <location>
        <begin position="136"/>
        <end position="142"/>
    </location>
</feature>
<feature type="helix" evidence="11">
    <location>
        <begin position="146"/>
        <end position="151"/>
    </location>
</feature>
<feature type="helix" evidence="11">
    <location>
        <begin position="152"/>
        <end position="155"/>
    </location>
</feature>
<feature type="helix" evidence="11">
    <location>
        <begin position="165"/>
        <end position="179"/>
    </location>
</feature>
<feature type="turn" evidence="11">
    <location>
        <begin position="180"/>
        <end position="182"/>
    </location>
</feature>
<proteinExistence type="evidence at protein level"/>